<feature type="chain" id="PRO_0000427089" description="ESX-5 secretion system protein EccD5">
    <location>
        <begin position="1"/>
        <end position="503"/>
    </location>
</feature>
<feature type="transmembrane region" description="Helical" evidence="3">
    <location>
        <begin position="137"/>
        <end position="157"/>
    </location>
</feature>
<feature type="transmembrane region" description="Helical" evidence="3">
    <location>
        <begin position="169"/>
        <end position="189"/>
    </location>
</feature>
<feature type="transmembrane region" description="Helical" evidence="3">
    <location>
        <begin position="200"/>
        <end position="220"/>
    </location>
</feature>
<feature type="transmembrane region" description="Helical" evidence="3">
    <location>
        <begin position="224"/>
        <end position="244"/>
    </location>
</feature>
<feature type="transmembrane region" description="Helical" evidence="3">
    <location>
        <begin position="250"/>
        <end position="270"/>
    </location>
</feature>
<feature type="transmembrane region" description="Helical" evidence="3">
    <location>
        <begin position="272"/>
        <end position="292"/>
    </location>
</feature>
<feature type="transmembrane region" description="Helical" evidence="3">
    <location>
        <begin position="359"/>
        <end position="379"/>
    </location>
</feature>
<feature type="transmembrane region" description="Helical" evidence="3">
    <location>
        <begin position="382"/>
        <end position="402"/>
    </location>
</feature>
<feature type="transmembrane region" description="Helical" evidence="3">
    <location>
        <begin position="413"/>
        <end position="433"/>
    </location>
</feature>
<feature type="transmembrane region" description="Helical" evidence="3">
    <location>
        <begin position="439"/>
        <end position="459"/>
    </location>
</feature>
<feature type="transmembrane region" description="Helical" evidence="3">
    <location>
        <begin position="480"/>
        <end position="500"/>
    </location>
</feature>
<protein>
    <recommendedName>
        <fullName evidence="2">ESX-5 secretion system protein EccD5</fullName>
    </recommendedName>
    <alternativeName>
        <fullName evidence="2">ESX conserved component D5</fullName>
    </alternativeName>
    <alternativeName>
        <fullName evidence="2">Type VII secretion system protein EccD5</fullName>
        <shortName evidence="2">T7SS protein EccD5</shortName>
    </alternativeName>
</protein>
<accession>P9WNP8</accession>
<accession>L0T9A2</accession>
<accession>O53944</accession>
<accession>Q7D7Y4</accession>
<dbReference type="EMBL" id="AE000516">
    <property type="protein sequence ID" value="AAK46115.1"/>
    <property type="molecule type" value="Genomic_DNA"/>
</dbReference>
<dbReference type="PIR" id="D70930">
    <property type="entry name" value="D70930"/>
</dbReference>
<dbReference type="RefSeq" id="WP_003900411.1">
    <property type="nucleotide sequence ID" value="NZ_KK341227.1"/>
</dbReference>
<dbReference type="SMR" id="P9WNP8"/>
<dbReference type="GeneID" id="45425772"/>
<dbReference type="KEGG" id="mtc:MT1844"/>
<dbReference type="PATRIC" id="fig|83331.31.peg.1986"/>
<dbReference type="HOGENOM" id="CLU_041782_0_0_11"/>
<dbReference type="Proteomes" id="UP000001020">
    <property type="component" value="Chromosome"/>
</dbReference>
<dbReference type="GO" id="GO:0005886">
    <property type="term" value="C:plasma membrane"/>
    <property type="evidence" value="ECO:0007669"/>
    <property type="project" value="UniProtKB-SubCell"/>
</dbReference>
<dbReference type="Gene3D" id="3.10.20.90">
    <property type="entry name" value="Phosphatidylinositol 3-kinase Catalytic Subunit, Chain A, domain 1"/>
    <property type="match status" value="1"/>
</dbReference>
<dbReference type="InterPro" id="IPR044049">
    <property type="entry name" value="EccD_transm"/>
</dbReference>
<dbReference type="InterPro" id="IPR006707">
    <property type="entry name" value="T7SS_EccD"/>
</dbReference>
<dbReference type="InterPro" id="IPR024962">
    <property type="entry name" value="YukD-like"/>
</dbReference>
<dbReference type="NCBIfam" id="TIGR03920">
    <property type="entry name" value="T7SS_EccD"/>
    <property type="match status" value="1"/>
</dbReference>
<dbReference type="Pfam" id="PF19053">
    <property type="entry name" value="EccD"/>
    <property type="match status" value="1"/>
</dbReference>
<dbReference type="Pfam" id="PF08817">
    <property type="entry name" value="YukD"/>
    <property type="match status" value="1"/>
</dbReference>
<dbReference type="PIRSF" id="PIRSF017804">
    <property type="entry name" value="Secretion_EccD1"/>
    <property type="match status" value="1"/>
</dbReference>
<reference key="1">
    <citation type="journal article" date="2002" name="J. Bacteriol.">
        <title>Whole-genome comparison of Mycobacterium tuberculosis clinical and laboratory strains.</title>
        <authorList>
            <person name="Fleischmann R.D."/>
            <person name="Alland D."/>
            <person name="Eisen J.A."/>
            <person name="Carpenter L."/>
            <person name="White O."/>
            <person name="Peterson J.D."/>
            <person name="DeBoy R.T."/>
            <person name="Dodson R.J."/>
            <person name="Gwinn M.L."/>
            <person name="Haft D.H."/>
            <person name="Hickey E.K."/>
            <person name="Kolonay J.F."/>
            <person name="Nelson W.C."/>
            <person name="Umayam L.A."/>
            <person name="Ermolaeva M.D."/>
            <person name="Salzberg S.L."/>
            <person name="Delcher A."/>
            <person name="Utterback T.R."/>
            <person name="Weidman J.F."/>
            <person name="Khouri H.M."/>
            <person name="Gill J."/>
            <person name="Mikula A."/>
            <person name="Bishai W."/>
            <person name="Jacobs W.R. Jr."/>
            <person name="Venter J.C."/>
            <person name="Fraser C.M."/>
        </authorList>
    </citation>
    <scope>NUCLEOTIDE SEQUENCE [LARGE SCALE GENOMIC DNA]</scope>
    <source>
        <strain>CDC 1551 / Oshkosh</strain>
    </source>
</reference>
<organism>
    <name type="scientific">Mycobacterium tuberculosis (strain CDC 1551 / Oshkosh)</name>
    <dbReference type="NCBI Taxonomy" id="83331"/>
    <lineage>
        <taxon>Bacteria</taxon>
        <taxon>Bacillati</taxon>
        <taxon>Actinomycetota</taxon>
        <taxon>Actinomycetes</taxon>
        <taxon>Mycobacteriales</taxon>
        <taxon>Mycobacteriaceae</taxon>
        <taxon>Mycobacterium</taxon>
        <taxon>Mycobacterium tuberculosis complex</taxon>
    </lineage>
</organism>
<comment type="function">
    <text evidence="2">Part of the ESX-5 specialized secretion system, which is responsible for the secretion of EsxN and a number of PE_PGRS and PPE proteins, including PPE41.</text>
</comment>
<comment type="subunit">
    <text evidence="1">Part of the ESX-5 / type VII secretion system (T7SS), which is composed of cytosolic and membrane components. The ESX-5 membrane complex is composed of EccB5, EccC5, EccD5 and EccE5.</text>
</comment>
<comment type="subcellular location">
    <subcellularLocation>
        <location evidence="1">Cell inner membrane</location>
        <topology evidence="3">Multi-pass membrane protein</topology>
    </subcellularLocation>
</comment>
<comment type="similarity">
    <text evidence="4">Belongs to the EccD/Snm4 family.</text>
</comment>
<evidence type="ECO:0000250" key="1">
    <source>
        <dbReference type="UniProtKB" id="B2HSU6"/>
    </source>
</evidence>
<evidence type="ECO:0000250" key="2">
    <source>
        <dbReference type="UniProtKB" id="P9WNP9"/>
    </source>
</evidence>
<evidence type="ECO:0000255" key="3"/>
<evidence type="ECO:0000305" key="4"/>
<sequence>MTAVADAPQADIEGVASPQAVVVGVMAGEGVQIGVLLDANAPVSVMTDPLLKVVNSRLRELGEAPLEATGRGRWALCLVDGAPLRATQSLTEQDVYDGDRLWIRFIADTERRSQVIEHISTAVASDLSKRFARIDPIVAVQVGASMVATGVVLATGVLGWWRWHHNTWLTTIYTAVIGVLVLAVAMLLLMRAKTDADRRVADIMLMSAIMPVTVAAAAAPPGPVGSPQAVLGFGVLTVAAALALRFTGRRLGIYTTIVIIGALTMLAALARMVAATSAVTLLSSLLLICVVAYHAAPALSRRLAGIRLPVFPSATSRWVFEARPDLPTTVVVSGGSAPVLEGPSSVRDVLLQAERARSFLSGLLTGLGVMVVVCMTSLCDPHTGQRWLPLILAGFTSGFLLLRGRSYVDRWQSITLAGTAVIIAAAVCVRYALELSSPLAVSIVAAILVLLPAAGMAAAAHVPHTIYSPLFRKFVEWIEYLCLMPIFPLALWLMNVYAAIRYR</sequence>
<name>ECCD5_MYCTO</name>
<proteinExistence type="inferred from homology"/>
<keyword id="KW-0997">Cell inner membrane</keyword>
<keyword id="KW-1003">Cell membrane</keyword>
<keyword id="KW-0472">Membrane</keyword>
<keyword id="KW-1185">Reference proteome</keyword>
<keyword id="KW-0812">Transmembrane</keyword>
<keyword id="KW-1133">Transmembrane helix</keyword>
<keyword id="KW-0813">Transport</keyword>
<gene>
    <name evidence="2" type="primary">eccD5</name>
    <name type="ordered locus">MT1844</name>
</gene>